<dbReference type="EC" id="3.2.1.21" evidence="1"/>
<dbReference type="EMBL" id="AL022140">
    <property type="protein sequence ID" value="CAA18113.1"/>
    <property type="status" value="ALT_SEQ"/>
    <property type="molecule type" value="Genomic_DNA"/>
</dbReference>
<dbReference type="EMBL" id="AL161556">
    <property type="protein sequence ID" value="CAB79165.1"/>
    <property type="status" value="ALT_SEQ"/>
    <property type="molecule type" value="Genomic_DNA"/>
</dbReference>
<dbReference type="EMBL" id="CP002687">
    <property type="protein sequence ID" value="AEE84549.1"/>
    <property type="molecule type" value="Genomic_DNA"/>
</dbReference>
<dbReference type="PIR" id="T49117">
    <property type="entry name" value="T49117"/>
</dbReference>
<dbReference type="RefSeq" id="NP_193941.2">
    <property type="nucleotide sequence ID" value="NM_118331.2"/>
</dbReference>
<dbReference type="SMR" id="O65458"/>
<dbReference type="FunCoup" id="O65458">
    <property type="interactions" value="195"/>
</dbReference>
<dbReference type="STRING" id="3702.O65458"/>
<dbReference type="CAZy" id="GH1">
    <property type="family name" value="Glycoside Hydrolase Family 1"/>
</dbReference>
<dbReference type="GlyCosmos" id="O65458">
    <property type="glycosylation" value="8 sites, No reported glycans"/>
</dbReference>
<dbReference type="GlyGen" id="O65458">
    <property type="glycosylation" value="8 sites"/>
</dbReference>
<dbReference type="iPTMnet" id="O65458"/>
<dbReference type="PaxDb" id="3702-AT4G22100.1"/>
<dbReference type="ProteomicsDB" id="240762"/>
<dbReference type="EnsemblPlants" id="AT4G22100.1">
    <property type="protein sequence ID" value="AT4G22100.1"/>
    <property type="gene ID" value="AT4G22100"/>
</dbReference>
<dbReference type="GeneID" id="828299"/>
<dbReference type="Gramene" id="AT4G22100.1">
    <property type="protein sequence ID" value="AT4G22100.1"/>
    <property type="gene ID" value="AT4G22100"/>
</dbReference>
<dbReference type="KEGG" id="ath:AT4G22100"/>
<dbReference type="Araport" id="AT4G22100"/>
<dbReference type="TAIR" id="AT4G22100">
    <property type="gene designation" value="BGLU3"/>
</dbReference>
<dbReference type="eggNOG" id="KOG0626">
    <property type="taxonomic scope" value="Eukaryota"/>
</dbReference>
<dbReference type="HOGENOM" id="CLU_001859_1_0_1"/>
<dbReference type="InParanoid" id="O65458"/>
<dbReference type="OMA" id="QANESKC"/>
<dbReference type="PhylomeDB" id="O65458"/>
<dbReference type="BioCyc" id="ARA:AT4G22100-MONOMER"/>
<dbReference type="PRO" id="PR:O65458"/>
<dbReference type="Proteomes" id="UP000006548">
    <property type="component" value="Chromosome 4"/>
</dbReference>
<dbReference type="ExpressionAtlas" id="O65458">
    <property type="expression patterns" value="baseline and differential"/>
</dbReference>
<dbReference type="GO" id="GO:0008422">
    <property type="term" value="F:beta-glucosidase activity"/>
    <property type="evidence" value="ECO:0007669"/>
    <property type="project" value="UniProtKB-EC"/>
</dbReference>
<dbReference type="GO" id="GO:0005975">
    <property type="term" value="P:carbohydrate metabolic process"/>
    <property type="evidence" value="ECO:0007669"/>
    <property type="project" value="InterPro"/>
</dbReference>
<dbReference type="FunFam" id="3.20.20.80:FF:000069">
    <property type="entry name" value="Beta-glucosidase 1"/>
    <property type="match status" value="1"/>
</dbReference>
<dbReference type="Gene3D" id="3.20.20.80">
    <property type="entry name" value="Glycosidases"/>
    <property type="match status" value="1"/>
</dbReference>
<dbReference type="InterPro" id="IPR001360">
    <property type="entry name" value="Glyco_hydro_1"/>
</dbReference>
<dbReference type="InterPro" id="IPR033132">
    <property type="entry name" value="Glyco_hydro_1_N_CS"/>
</dbReference>
<dbReference type="InterPro" id="IPR017853">
    <property type="entry name" value="Glycoside_hydrolase_SF"/>
</dbReference>
<dbReference type="PANTHER" id="PTHR10353:SF150">
    <property type="entry name" value="BETA-GLUCOSIDASE 1-RELATED"/>
    <property type="match status" value="1"/>
</dbReference>
<dbReference type="PANTHER" id="PTHR10353">
    <property type="entry name" value="GLYCOSYL HYDROLASE"/>
    <property type="match status" value="1"/>
</dbReference>
<dbReference type="Pfam" id="PF00232">
    <property type="entry name" value="Glyco_hydro_1"/>
    <property type="match status" value="1"/>
</dbReference>
<dbReference type="PRINTS" id="PR00131">
    <property type="entry name" value="GLHYDRLASE1"/>
</dbReference>
<dbReference type="SUPFAM" id="SSF51445">
    <property type="entry name" value="(Trans)glycosidases"/>
    <property type="match status" value="1"/>
</dbReference>
<dbReference type="PROSITE" id="PS00653">
    <property type="entry name" value="GLYCOSYL_HYDROL_F1_2"/>
    <property type="match status" value="1"/>
</dbReference>
<name>BGL03_ARATH</name>
<proteinExistence type="inferred from homology"/>
<protein>
    <recommendedName>
        <fullName evidence="7">Beta-glucosidase 3</fullName>
        <shortName evidence="7">AtBGLU3</shortName>
        <ecNumber evidence="1">3.2.1.21</ecNumber>
    </recommendedName>
</protein>
<accession>O65458</accession>
<gene>
    <name evidence="7" type="primary">BGLU3</name>
    <name evidence="9" type="ordered locus">At4g22100</name>
    <name evidence="10" type="ORF">F1N20.200</name>
</gene>
<feature type="signal peptide" evidence="5">
    <location>
        <begin position="1"/>
        <end position="23"/>
    </location>
</feature>
<feature type="chain" id="PRO_0000389565" description="Beta-glucosidase 3">
    <location>
        <begin position="24"/>
        <end position="507"/>
    </location>
</feature>
<feature type="active site" description="Proton donor" evidence="3">
    <location>
        <position position="184"/>
    </location>
</feature>
<feature type="active site" description="Nucleophile" evidence="3">
    <location>
        <position position="394"/>
    </location>
</feature>
<feature type="binding site" evidence="3">
    <location>
        <position position="41"/>
    </location>
    <ligand>
        <name>a beta-D-glucoside</name>
        <dbReference type="ChEBI" id="CHEBI:22798"/>
    </ligand>
</feature>
<feature type="binding site" evidence="3">
    <location>
        <position position="138"/>
    </location>
    <ligand>
        <name>a beta-D-glucoside</name>
        <dbReference type="ChEBI" id="CHEBI:22798"/>
    </ligand>
</feature>
<feature type="binding site" evidence="3">
    <location>
        <begin position="183"/>
        <end position="184"/>
    </location>
    <ligand>
        <name>a beta-D-glucoside</name>
        <dbReference type="ChEBI" id="CHEBI:22798"/>
    </ligand>
</feature>
<feature type="binding site" evidence="3">
    <location>
        <position position="326"/>
    </location>
    <ligand>
        <name>a beta-D-glucoside</name>
        <dbReference type="ChEBI" id="CHEBI:22798"/>
    </ligand>
</feature>
<feature type="binding site" evidence="4">
    <location>
        <position position="394"/>
    </location>
    <ligand>
        <name>a beta-D-glucoside</name>
        <dbReference type="ChEBI" id="CHEBI:22798"/>
    </ligand>
</feature>
<feature type="binding site" evidence="3">
    <location>
        <position position="439"/>
    </location>
    <ligand>
        <name>a beta-D-glucoside</name>
        <dbReference type="ChEBI" id="CHEBI:22798"/>
    </ligand>
</feature>
<feature type="binding site" evidence="2">
    <location>
        <position position="455"/>
    </location>
    <ligand>
        <name>a beta-D-glucoside</name>
        <dbReference type="ChEBI" id="CHEBI:22798"/>
    </ligand>
</feature>
<feature type="glycosylation site" description="N-linked (GlcNAc...) asparagine" evidence="6">
    <location>
        <position position="64"/>
    </location>
</feature>
<feature type="glycosylation site" description="N-linked (GlcNAc...) asparagine" evidence="6">
    <location>
        <position position="209"/>
    </location>
</feature>
<feature type="glycosylation site" description="N-linked (GlcNAc...) asparagine" evidence="6">
    <location>
        <position position="214"/>
    </location>
</feature>
<feature type="glycosylation site" description="N-linked (GlcNAc...) asparagine" evidence="6">
    <location>
        <position position="361"/>
    </location>
</feature>
<feature type="glycosylation site" description="N-linked (GlcNAc...) asparagine" evidence="6">
    <location>
        <position position="429"/>
    </location>
</feature>
<feature type="glycosylation site" description="N-linked (GlcNAc...) asparagine" evidence="6">
    <location>
        <position position="461"/>
    </location>
</feature>
<feature type="glycosylation site" description="N-linked (GlcNAc...) asparagine" evidence="6">
    <location>
        <position position="485"/>
    </location>
</feature>
<feature type="glycosylation site" description="N-linked (GlcNAc...) asparagine" evidence="6">
    <location>
        <position position="500"/>
    </location>
</feature>
<feature type="disulfide bond" evidence="3">
    <location>
        <begin position="203"/>
        <end position="210"/>
    </location>
</feature>
<comment type="catalytic activity">
    <reaction evidence="1">
        <text>Hydrolysis of terminal, non-reducing beta-D-glucosyl residues with release of beta-D-glucose.</text>
        <dbReference type="EC" id="3.2.1.21"/>
    </reaction>
</comment>
<comment type="similarity">
    <text evidence="8">Belongs to the glycosyl hydrolase 1 family.</text>
</comment>
<comment type="sequence caution" evidence="8">
    <conflict type="erroneous gene model prediction">
        <sequence resource="EMBL-CDS" id="CAA18113"/>
    </conflict>
</comment>
<comment type="sequence caution" evidence="8">
    <conflict type="erroneous gene model prediction">
        <sequence resource="EMBL-CDS" id="CAB79165"/>
    </conflict>
</comment>
<organism>
    <name type="scientific">Arabidopsis thaliana</name>
    <name type="common">Mouse-ear cress</name>
    <dbReference type="NCBI Taxonomy" id="3702"/>
    <lineage>
        <taxon>Eukaryota</taxon>
        <taxon>Viridiplantae</taxon>
        <taxon>Streptophyta</taxon>
        <taxon>Embryophyta</taxon>
        <taxon>Tracheophyta</taxon>
        <taxon>Spermatophyta</taxon>
        <taxon>Magnoliopsida</taxon>
        <taxon>eudicotyledons</taxon>
        <taxon>Gunneridae</taxon>
        <taxon>Pentapetalae</taxon>
        <taxon>rosids</taxon>
        <taxon>malvids</taxon>
        <taxon>Brassicales</taxon>
        <taxon>Brassicaceae</taxon>
        <taxon>Camelineae</taxon>
        <taxon>Arabidopsis</taxon>
    </lineage>
</organism>
<reference key="1">
    <citation type="journal article" date="1999" name="Nature">
        <title>Sequence and analysis of chromosome 4 of the plant Arabidopsis thaliana.</title>
        <authorList>
            <person name="Mayer K.F.X."/>
            <person name="Schueller C."/>
            <person name="Wambutt R."/>
            <person name="Murphy G."/>
            <person name="Volckaert G."/>
            <person name="Pohl T."/>
            <person name="Duesterhoeft A."/>
            <person name="Stiekema W."/>
            <person name="Entian K.-D."/>
            <person name="Terryn N."/>
            <person name="Harris B."/>
            <person name="Ansorge W."/>
            <person name="Brandt P."/>
            <person name="Grivell L.A."/>
            <person name="Rieger M."/>
            <person name="Weichselgartner M."/>
            <person name="de Simone V."/>
            <person name="Obermaier B."/>
            <person name="Mache R."/>
            <person name="Mueller M."/>
            <person name="Kreis M."/>
            <person name="Delseny M."/>
            <person name="Puigdomenech P."/>
            <person name="Watson M."/>
            <person name="Schmidtheini T."/>
            <person name="Reichert B."/>
            <person name="Portetelle D."/>
            <person name="Perez-Alonso M."/>
            <person name="Boutry M."/>
            <person name="Bancroft I."/>
            <person name="Vos P."/>
            <person name="Hoheisel J."/>
            <person name="Zimmermann W."/>
            <person name="Wedler H."/>
            <person name="Ridley P."/>
            <person name="Langham S.-A."/>
            <person name="McCullagh B."/>
            <person name="Bilham L."/>
            <person name="Robben J."/>
            <person name="van der Schueren J."/>
            <person name="Grymonprez B."/>
            <person name="Chuang Y.-J."/>
            <person name="Vandenbussche F."/>
            <person name="Braeken M."/>
            <person name="Weltjens I."/>
            <person name="Voet M."/>
            <person name="Bastiaens I."/>
            <person name="Aert R."/>
            <person name="Defoor E."/>
            <person name="Weitzenegger T."/>
            <person name="Bothe G."/>
            <person name="Ramsperger U."/>
            <person name="Hilbert H."/>
            <person name="Braun M."/>
            <person name="Holzer E."/>
            <person name="Brandt A."/>
            <person name="Peters S."/>
            <person name="van Staveren M."/>
            <person name="Dirkse W."/>
            <person name="Mooijman P."/>
            <person name="Klein Lankhorst R."/>
            <person name="Rose M."/>
            <person name="Hauf J."/>
            <person name="Koetter P."/>
            <person name="Berneiser S."/>
            <person name="Hempel S."/>
            <person name="Feldpausch M."/>
            <person name="Lamberth S."/>
            <person name="Van den Daele H."/>
            <person name="De Keyser A."/>
            <person name="Buysshaert C."/>
            <person name="Gielen J."/>
            <person name="Villarroel R."/>
            <person name="De Clercq R."/>
            <person name="van Montagu M."/>
            <person name="Rogers J."/>
            <person name="Cronin A."/>
            <person name="Quail M.A."/>
            <person name="Bray-Allen S."/>
            <person name="Clark L."/>
            <person name="Doggett J."/>
            <person name="Hall S."/>
            <person name="Kay M."/>
            <person name="Lennard N."/>
            <person name="McLay K."/>
            <person name="Mayes R."/>
            <person name="Pettett A."/>
            <person name="Rajandream M.A."/>
            <person name="Lyne M."/>
            <person name="Benes V."/>
            <person name="Rechmann S."/>
            <person name="Borkova D."/>
            <person name="Bloecker H."/>
            <person name="Scharfe M."/>
            <person name="Grimm M."/>
            <person name="Loehnert T.-H."/>
            <person name="Dose S."/>
            <person name="de Haan M."/>
            <person name="Maarse A.C."/>
            <person name="Schaefer M."/>
            <person name="Mueller-Auer S."/>
            <person name="Gabel C."/>
            <person name="Fuchs M."/>
            <person name="Fartmann B."/>
            <person name="Granderath K."/>
            <person name="Dauner D."/>
            <person name="Herzl A."/>
            <person name="Neumann S."/>
            <person name="Argiriou A."/>
            <person name="Vitale D."/>
            <person name="Liguori R."/>
            <person name="Piravandi E."/>
            <person name="Massenet O."/>
            <person name="Quigley F."/>
            <person name="Clabauld G."/>
            <person name="Muendlein A."/>
            <person name="Felber R."/>
            <person name="Schnabl S."/>
            <person name="Hiller R."/>
            <person name="Schmidt W."/>
            <person name="Lecharny A."/>
            <person name="Aubourg S."/>
            <person name="Chefdor F."/>
            <person name="Cooke R."/>
            <person name="Berger C."/>
            <person name="Monfort A."/>
            <person name="Casacuberta E."/>
            <person name="Gibbons T."/>
            <person name="Weber N."/>
            <person name="Vandenbol M."/>
            <person name="Bargues M."/>
            <person name="Terol J."/>
            <person name="Torres A."/>
            <person name="Perez-Perez A."/>
            <person name="Purnelle B."/>
            <person name="Bent E."/>
            <person name="Johnson S."/>
            <person name="Tacon D."/>
            <person name="Jesse T."/>
            <person name="Heijnen L."/>
            <person name="Schwarz S."/>
            <person name="Scholler P."/>
            <person name="Heber S."/>
            <person name="Francs P."/>
            <person name="Bielke C."/>
            <person name="Frishman D."/>
            <person name="Haase D."/>
            <person name="Lemcke K."/>
            <person name="Mewes H.-W."/>
            <person name="Stocker S."/>
            <person name="Zaccaria P."/>
            <person name="Bevan M."/>
            <person name="Wilson R.K."/>
            <person name="de la Bastide M."/>
            <person name="Habermann K."/>
            <person name="Parnell L."/>
            <person name="Dedhia N."/>
            <person name="Gnoj L."/>
            <person name="Schutz K."/>
            <person name="Huang E."/>
            <person name="Spiegel L."/>
            <person name="Sekhon M."/>
            <person name="Murray J."/>
            <person name="Sheet P."/>
            <person name="Cordes M."/>
            <person name="Abu-Threideh J."/>
            <person name="Stoneking T."/>
            <person name="Kalicki J."/>
            <person name="Graves T."/>
            <person name="Harmon G."/>
            <person name="Edwards J."/>
            <person name="Latreille P."/>
            <person name="Courtney L."/>
            <person name="Cloud J."/>
            <person name="Abbott A."/>
            <person name="Scott K."/>
            <person name="Johnson D."/>
            <person name="Minx P."/>
            <person name="Bentley D."/>
            <person name="Fulton B."/>
            <person name="Miller N."/>
            <person name="Greco T."/>
            <person name="Kemp K."/>
            <person name="Kramer J."/>
            <person name="Fulton L."/>
            <person name="Mardis E."/>
            <person name="Dante M."/>
            <person name="Pepin K."/>
            <person name="Hillier L.W."/>
            <person name="Nelson J."/>
            <person name="Spieth J."/>
            <person name="Ryan E."/>
            <person name="Andrews S."/>
            <person name="Geisel C."/>
            <person name="Layman D."/>
            <person name="Du H."/>
            <person name="Ali J."/>
            <person name="Berghoff A."/>
            <person name="Jones K."/>
            <person name="Drone K."/>
            <person name="Cotton M."/>
            <person name="Joshu C."/>
            <person name="Antonoiu B."/>
            <person name="Zidanic M."/>
            <person name="Strong C."/>
            <person name="Sun H."/>
            <person name="Lamar B."/>
            <person name="Yordan C."/>
            <person name="Ma P."/>
            <person name="Zhong J."/>
            <person name="Preston R."/>
            <person name="Vil D."/>
            <person name="Shekher M."/>
            <person name="Matero A."/>
            <person name="Shah R."/>
            <person name="Swaby I.K."/>
            <person name="O'Shaughnessy A."/>
            <person name="Rodriguez M."/>
            <person name="Hoffman J."/>
            <person name="Till S."/>
            <person name="Granat S."/>
            <person name="Shohdy N."/>
            <person name="Hasegawa A."/>
            <person name="Hameed A."/>
            <person name="Lodhi M."/>
            <person name="Johnson A."/>
            <person name="Chen E."/>
            <person name="Marra M.A."/>
            <person name="Martienssen R."/>
            <person name="McCombie W.R."/>
        </authorList>
    </citation>
    <scope>NUCLEOTIDE SEQUENCE [LARGE SCALE GENOMIC DNA]</scope>
    <source>
        <strain>cv. Columbia</strain>
    </source>
</reference>
<reference key="2">
    <citation type="journal article" date="2017" name="Plant J.">
        <title>Araport11: a complete reannotation of the Arabidopsis thaliana reference genome.</title>
        <authorList>
            <person name="Cheng C.Y."/>
            <person name="Krishnakumar V."/>
            <person name="Chan A.P."/>
            <person name="Thibaud-Nissen F."/>
            <person name="Schobel S."/>
            <person name="Town C.D."/>
        </authorList>
    </citation>
    <scope>GENOME REANNOTATION</scope>
    <source>
        <strain>cv. Columbia</strain>
    </source>
</reference>
<reference key="3">
    <citation type="journal article" date="2004" name="Plant Mol. Biol.">
        <title>Functional genomic analysis of Arabidopsis thaliana glycoside hydrolase family 1.</title>
        <authorList>
            <person name="Xu Z."/>
            <person name="Escamilla-Trevino L.L."/>
            <person name="Zeng L."/>
            <person name="Lalgondar M."/>
            <person name="Bevan D.R."/>
            <person name="Winkel B.S.J."/>
            <person name="Mohamed A."/>
            <person name="Cheng C.-L."/>
            <person name="Shih M.-C."/>
            <person name="Poulton J.E."/>
            <person name="Esen A."/>
        </authorList>
    </citation>
    <scope>GENE FAMILY</scope>
    <scope>NOMENCLATURE</scope>
</reference>
<sequence>MELTLSLLTIFLLFFALSGRCSDKNDFPEGFIFGSATSAYQWEGAFDEDGRKPSVWDTFLHTRNLSNGDITSDGYHKYKEDVKLMVETGLDAFRFSISWSRLIPNGRGPVNPKGLQFYKNFIQELVSHGIEPHVTLFHYDHPQYLEDEYGGWINRRIIQDFTAYANVCFREFGHHVKFWTTINEANIFTIGGYNDGITPPGRCSSPGRNCSSGNSSTEPYIVGHNLLLAHASASRLYKQKYKDMQGGSVGFSLFSLGFTPSTSSKDDDIAVQRAKDFYFGWMLEPFIFGDYPDEMKRTVGSRLPVFSKEESEQVKGSSDFIGIIHYLAASVTSIKIKPSISGNPDFYSDMGVSMTWTVLGNFSAFEYAVAPWAMESVLEYIKQSYGNPPIYILENGTPMKQDLQLQQKDTPRIEYLHAYIAAVLKSIRNGSDTRGYFIWSFMDLYELVKGYEFSFGLYSVNFSDPHRTRSPKLSAHWYSAFLKGNTTFLGSQGIMQMQSNFSSSASS</sequence>
<keyword id="KW-1015">Disulfide bond</keyword>
<keyword id="KW-0325">Glycoprotein</keyword>
<keyword id="KW-0326">Glycosidase</keyword>
<keyword id="KW-0378">Hydrolase</keyword>
<keyword id="KW-1185">Reference proteome</keyword>
<keyword id="KW-0732">Signal</keyword>
<evidence type="ECO:0000250" key="1">
    <source>
        <dbReference type="UniProtKB" id="O64879"/>
    </source>
</evidence>
<evidence type="ECO:0000250" key="2">
    <source>
        <dbReference type="UniProtKB" id="Q1XH05"/>
    </source>
</evidence>
<evidence type="ECO:0000250" key="3">
    <source>
        <dbReference type="UniProtKB" id="Q7XSK0"/>
    </source>
</evidence>
<evidence type="ECO:0000250" key="4">
    <source>
        <dbReference type="UniProtKB" id="Q9SPP9"/>
    </source>
</evidence>
<evidence type="ECO:0000255" key="5"/>
<evidence type="ECO:0000255" key="6">
    <source>
        <dbReference type="PROSITE-ProRule" id="PRU00498"/>
    </source>
</evidence>
<evidence type="ECO:0000303" key="7">
    <source>
    </source>
</evidence>
<evidence type="ECO:0000305" key="8"/>
<evidence type="ECO:0000312" key="9">
    <source>
        <dbReference type="Araport" id="AT4G22100"/>
    </source>
</evidence>
<evidence type="ECO:0000312" key="10">
    <source>
        <dbReference type="EMBL" id="CAA18113.1"/>
    </source>
</evidence>